<name>NTPPA_VIBVY</name>
<keyword id="KW-0963">Cytoplasm</keyword>
<keyword id="KW-0378">Hydrolase</keyword>
<keyword id="KW-0546">Nucleotide metabolism</keyword>
<proteinExistence type="inferred from homology"/>
<sequence length="186" mass="20649">MHKLVLASGSPRRKELLAQLGYTFDVVLPDIEECKAEQETAAEYVLRLSQQKAQAGLALVSESSIVVGSDTVVVCDGQVLEKPHHFADAQRMLTQLSDRRHQVMTAVTVVSAEKQHSIVVTTEVWFKKLTQEEIEQYWQSGEPCDKAGSYGIQGLGGRFVTRIEGSYSAVVGLPLYETDQLLHEFI</sequence>
<comment type="function">
    <text evidence="1">Nucleoside triphosphate pyrophosphatase that hydrolyzes dTTP and UTP. May have a dual role in cell division arrest and in preventing the incorporation of modified nucleotides into cellular nucleic acids.</text>
</comment>
<comment type="catalytic activity">
    <reaction evidence="1">
        <text>dTTP + H2O = dTMP + diphosphate + H(+)</text>
        <dbReference type="Rhea" id="RHEA:28534"/>
        <dbReference type="ChEBI" id="CHEBI:15377"/>
        <dbReference type="ChEBI" id="CHEBI:15378"/>
        <dbReference type="ChEBI" id="CHEBI:33019"/>
        <dbReference type="ChEBI" id="CHEBI:37568"/>
        <dbReference type="ChEBI" id="CHEBI:63528"/>
        <dbReference type="EC" id="3.6.1.9"/>
    </reaction>
</comment>
<comment type="catalytic activity">
    <reaction evidence="1">
        <text>UTP + H2O = UMP + diphosphate + H(+)</text>
        <dbReference type="Rhea" id="RHEA:29395"/>
        <dbReference type="ChEBI" id="CHEBI:15377"/>
        <dbReference type="ChEBI" id="CHEBI:15378"/>
        <dbReference type="ChEBI" id="CHEBI:33019"/>
        <dbReference type="ChEBI" id="CHEBI:46398"/>
        <dbReference type="ChEBI" id="CHEBI:57865"/>
        <dbReference type="EC" id="3.6.1.9"/>
    </reaction>
</comment>
<comment type="cofactor">
    <cofactor evidence="1">
        <name>a divalent metal cation</name>
        <dbReference type="ChEBI" id="CHEBI:60240"/>
    </cofactor>
</comment>
<comment type="subcellular location">
    <subcellularLocation>
        <location evidence="1">Cytoplasm</location>
    </subcellularLocation>
</comment>
<comment type="similarity">
    <text evidence="1">Belongs to the Maf family. YhdE subfamily.</text>
</comment>
<feature type="chain" id="PRO_0000123074" description="dTTP/UTP pyrophosphatase">
    <location>
        <begin position="1"/>
        <end position="186"/>
    </location>
</feature>
<feature type="active site" description="Proton acceptor" evidence="1">
    <location>
        <position position="70"/>
    </location>
</feature>
<feature type="site" description="Important for substrate specificity" evidence="1">
    <location>
        <position position="12"/>
    </location>
</feature>
<feature type="site" description="Important for substrate specificity" evidence="1">
    <location>
        <position position="71"/>
    </location>
</feature>
<feature type="site" description="Important for substrate specificity" evidence="1">
    <location>
        <position position="153"/>
    </location>
</feature>
<protein>
    <recommendedName>
        <fullName evidence="1">dTTP/UTP pyrophosphatase</fullName>
        <shortName evidence="1">dTTPase/UTPase</shortName>
        <ecNumber evidence="1">3.6.1.9</ecNumber>
    </recommendedName>
    <alternativeName>
        <fullName evidence="1">Nucleoside triphosphate pyrophosphatase</fullName>
    </alternativeName>
    <alternativeName>
        <fullName evidence="1">Nucleotide pyrophosphatase</fullName>
        <shortName evidence="1">Nucleotide PPase</shortName>
    </alternativeName>
</protein>
<evidence type="ECO:0000255" key="1">
    <source>
        <dbReference type="HAMAP-Rule" id="MF_00528"/>
    </source>
</evidence>
<organism>
    <name type="scientific">Vibrio vulnificus (strain YJ016)</name>
    <dbReference type="NCBI Taxonomy" id="196600"/>
    <lineage>
        <taxon>Bacteria</taxon>
        <taxon>Pseudomonadati</taxon>
        <taxon>Pseudomonadota</taxon>
        <taxon>Gammaproteobacteria</taxon>
        <taxon>Vibrionales</taxon>
        <taxon>Vibrionaceae</taxon>
        <taxon>Vibrio</taxon>
    </lineage>
</organism>
<dbReference type="EC" id="3.6.1.9" evidence="1"/>
<dbReference type="EMBL" id="BA000037">
    <property type="protein sequence ID" value="BAC95695.1"/>
    <property type="molecule type" value="Genomic_DNA"/>
</dbReference>
<dbReference type="RefSeq" id="WP_011079410.1">
    <property type="nucleotide sequence ID" value="NC_005139.1"/>
</dbReference>
<dbReference type="SMR" id="Q7MHE0"/>
<dbReference type="STRING" id="672.VV93_v1c26540"/>
<dbReference type="KEGG" id="vvy:VV2931"/>
<dbReference type="eggNOG" id="COG0424">
    <property type="taxonomic scope" value="Bacteria"/>
</dbReference>
<dbReference type="HOGENOM" id="CLU_040416_2_1_6"/>
<dbReference type="Proteomes" id="UP000002675">
    <property type="component" value="Chromosome I"/>
</dbReference>
<dbReference type="GO" id="GO:0005737">
    <property type="term" value="C:cytoplasm"/>
    <property type="evidence" value="ECO:0007669"/>
    <property type="project" value="UniProtKB-SubCell"/>
</dbReference>
<dbReference type="GO" id="GO:0036218">
    <property type="term" value="F:dTTP diphosphatase activity"/>
    <property type="evidence" value="ECO:0007669"/>
    <property type="project" value="RHEA"/>
</dbReference>
<dbReference type="GO" id="GO:0036221">
    <property type="term" value="F:UTP diphosphatase activity"/>
    <property type="evidence" value="ECO:0007669"/>
    <property type="project" value="RHEA"/>
</dbReference>
<dbReference type="GO" id="GO:0009117">
    <property type="term" value="P:nucleotide metabolic process"/>
    <property type="evidence" value="ECO:0007669"/>
    <property type="project" value="UniProtKB-KW"/>
</dbReference>
<dbReference type="CDD" id="cd00555">
    <property type="entry name" value="Maf"/>
    <property type="match status" value="1"/>
</dbReference>
<dbReference type="FunFam" id="3.90.950.10:FF:000004">
    <property type="entry name" value="dTTP/UTP pyrophosphatase"/>
    <property type="match status" value="1"/>
</dbReference>
<dbReference type="Gene3D" id="3.90.950.10">
    <property type="match status" value="1"/>
</dbReference>
<dbReference type="HAMAP" id="MF_00528">
    <property type="entry name" value="Maf"/>
    <property type="match status" value="1"/>
</dbReference>
<dbReference type="InterPro" id="IPR029001">
    <property type="entry name" value="ITPase-like_fam"/>
</dbReference>
<dbReference type="InterPro" id="IPR003697">
    <property type="entry name" value="Maf-like"/>
</dbReference>
<dbReference type="NCBIfam" id="TIGR00172">
    <property type="entry name" value="maf"/>
    <property type="match status" value="1"/>
</dbReference>
<dbReference type="PANTHER" id="PTHR43213">
    <property type="entry name" value="BIFUNCTIONAL DTTP/UTP PYROPHOSPHATASE/METHYLTRANSFERASE PROTEIN-RELATED"/>
    <property type="match status" value="1"/>
</dbReference>
<dbReference type="PANTHER" id="PTHR43213:SF5">
    <property type="entry name" value="BIFUNCTIONAL DTTP_UTP PYROPHOSPHATASE_METHYLTRANSFERASE PROTEIN-RELATED"/>
    <property type="match status" value="1"/>
</dbReference>
<dbReference type="Pfam" id="PF02545">
    <property type="entry name" value="Maf"/>
    <property type="match status" value="1"/>
</dbReference>
<dbReference type="PIRSF" id="PIRSF006305">
    <property type="entry name" value="Maf"/>
    <property type="match status" value="1"/>
</dbReference>
<dbReference type="SUPFAM" id="SSF52972">
    <property type="entry name" value="ITPase-like"/>
    <property type="match status" value="1"/>
</dbReference>
<accession>Q7MHE0</accession>
<reference key="1">
    <citation type="journal article" date="2003" name="Genome Res.">
        <title>Comparative genome analysis of Vibrio vulnificus, a marine pathogen.</title>
        <authorList>
            <person name="Chen C.-Y."/>
            <person name="Wu K.-M."/>
            <person name="Chang Y.-C."/>
            <person name="Chang C.-H."/>
            <person name="Tsai H.-C."/>
            <person name="Liao T.-L."/>
            <person name="Liu Y.-M."/>
            <person name="Chen H.-J."/>
            <person name="Shen A.B.-T."/>
            <person name="Li J.-C."/>
            <person name="Su T.-L."/>
            <person name="Shao C.-P."/>
            <person name="Lee C.-T."/>
            <person name="Hor L.-I."/>
            <person name="Tsai S.-F."/>
        </authorList>
    </citation>
    <scope>NUCLEOTIDE SEQUENCE [LARGE SCALE GENOMIC DNA]</scope>
    <source>
        <strain>YJ016</strain>
    </source>
</reference>
<gene>
    <name type="ordered locus">VV2931</name>
</gene>